<keyword id="KW-0687">Ribonucleoprotein</keyword>
<keyword id="KW-0689">Ribosomal protein</keyword>
<keyword id="KW-0694">RNA-binding</keyword>
<keyword id="KW-0699">rRNA-binding</keyword>
<name>RS8_SALPA</name>
<evidence type="ECO:0000250" key="1"/>
<evidence type="ECO:0000255" key="2">
    <source>
        <dbReference type="HAMAP-Rule" id="MF_01302"/>
    </source>
</evidence>
<evidence type="ECO:0000305" key="3"/>
<dbReference type="EMBL" id="CP000026">
    <property type="protein sequence ID" value="AAV79108.1"/>
    <property type="molecule type" value="Genomic_DNA"/>
</dbReference>
<dbReference type="RefSeq" id="WP_000062611.1">
    <property type="nucleotide sequence ID" value="NC_006511.1"/>
</dbReference>
<dbReference type="SMR" id="Q5PIU7"/>
<dbReference type="GeneID" id="93778681"/>
<dbReference type="KEGG" id="spt:SPA3292"/>
<dbReference type="HOGENOM" id="CLU_098428_0_0_6"/>
<dbReference type="Proteomes" id="UP000008185">
    <property type="component" value="Chromosome"/>
</dbReference>
<dbReference type="GO" id="GO:1990904">
    <property type="term" value="C:ribonucleoprotein complex"/>
    <property type="evidence" value="ECO:0007669"/>
    <property type="project" value="UniProtKB-KW"/>
</dbReference>
<dbReference type="GO" id="GO:0005840">
    <property type="term" value="C:ribosome"/>
    <property type="evidence" value="ECO:0007669"/>
    <property type="project" value="UniProtKB-KW"/>
</dbReference>
<dbReference type="GO" id="GO:0019843">
    <property type="term" value="F:rRNA binding"/>
    <property type="evidence" value="ECO:0007669"/>
    <property type="project" value="UniProtKB-UniRule"/>
</dbReference>
<dbReference type="GO" id="GO:0003735">
    <property type="term" value="F:structural constituent of ribosome"/>
    <property type="evidence" value="ECO:0007669"/>
    <property type="project" value="InterPro"/>
</dbReference>
<dbReference type="GO" id="GO:0006412">
    <property type="term" value="P:translation"/>
    <property type="evidence" value="ECO:0007669"/>
    <property type="project" value="UniProtKB-UniRule"/>
</dbReference>
<dbReference type="FunFam" id="3.30.1370.30:FF:000003">
    <property type="entry name" value="30S ribosomal protein S8"/>
    <property type="match status" value="1"/>
</dbReference>
<dbReference type="FunFam" id="3.30.1490.10:FF:000001">
    <property type="entry name" value="30S ribosomal protein S8"/>
    <property type="match status" value="1"/>
</dbReference>
<dbReference type="Gene3D" id="3.30.1370.30">
    <property type="match status" value="1"/>
</dbReference>
<dbReference type="Gene3D" id="3.30.1490.10">
    <property type="match status" value="1"/>
</dbReference>
<dbReference type="HAMAP" id="MF_01302_B">
    <property type="entry name" value="Ribosomal_uS8_B"/>
    <property type="match status" value="1"/>
</dbReference>
<dbReference type="InterPro" id="IPR000630">
    <property type="entry name" value="Ribosomal_uS8"/>
</dbReference>
<dbReference type="InterPro" id="IPR047863">
    <property type="entry name" value="Ribosomal_uS8_CS"/>
</dbReference>
<dbReference type="InterPro" id="IPR035987">
    <property type="entry name" value="Ribosomal_uS8_sf"/>
</dbReference>
<dbReference type="NCBIfam" id="NF001109">
    <property type="entry name" value="PRK00136.1"/>
    <property type="match status" value="1"/>
</dbReference>
<dbReference type="PANTHER" id="PTHR11758">
    <property type="entry name" value="40S RIBOSOMAL PROTEIN S15A"/>
    <property type="match status" value="1"/>
</dbReference>
<dbReference type="Pfam" id="PF00410">
    <property type="entry name" value="Ribosomal_S8"/>
    <property type="match status" value="1"/>
</dbReference>
<dbReference type="SUPFAM" id="SSF56047">
    <property type="entry name" value="Ribosomal protein S8"/>
    <property type="match status" value="1"/>
</dbReference>
<dbReference type="PROSITE" id="PS00053">
    <property type="entry name" value="RIBOSOMAL_S8"/>
    <property type="match status" value="1"/>
</dbReference>
<proteinExistence type="inferred from homology"/>
<accession>Q5PIU7</accession>
<feature type="initiator methionine" description="Removed" evidence="1">
    <location>
        <position position="1"/>
    </location>
</feature>
<feature type="chain" id="PRO_0000126477" description="Small ribosomal subunit protein uS8">
    <location>
        <begin position="2"/>
        <end position="130"/>
    </location>
</feature>
<reference key="1">
    <citation type="journal article" date="2004" name="Nat. Genet.">
        <title>Comparison of genome degradation in Paratyphi A and Typhi, human-restricted serovars of Salmonella enterica that cause typhoid.</title>
        <authorList>
            <person name="McClelland M."/>
            <person name="Sanderson K.E."/>
            <person name="Clifton S.W."/>
            <person name="Latreille P."/>
            <person name="Porwollik S."/>
            <person name="Sabo A."/>
            <person name="Meyer R."/>
            <person name="Bieri T."/>
            <person name="Ozersky P."/>
            <person name="McLellan M."/>
            <person name="Harkins C.R."/>
            <person name="Wang C."/>
            <person name="Nguyen C."/>
            <person name="Berghoff A."/>
            <person name="Elliott G."/>
            <person name="Kohlberg S."/>
            <person name="Strong C."/>
            <person name="Du F."/>
            <person name="Carter J."/>
            <person name="Kremizki C."/>
            <person name="Layman D."/>
            <person name="Leonard S."/>
            <person name="Sun H."/>
            <person name="Fulton L."/>
            <person name="Nash W."/>
            <person name="Miner T."/>
            <person name="Minx P."/>
            <person name="Delehaunty K."/>
            <person name="Fronick C."/>
            <person name="Magrini V."/>
            <person name="Nhan M."/>
            <person name="Warren W."/>
            <person name="Florea L."/>
            <person name="Spieth J."/>
            <person name="Wilson R.K."/>
        </authorList>
    </citation>
    <scope>NUCLEOTIDE SEQUENCE [LARGE SCALE GENOMIC DNA]</scope>
    <source>
        <strain>ATCC 9150 / SARB42</strain>
    </source>
</reference>
<protein>
    <recommendedName>
        <fullName evidence="2">Small ribosomal subunit protein uS8</fullName>
    </recommendedName>
    <alternativeName>
        <fullName evidence="3">30S ribosomal protein S8</fullName>
    </alternativeName>
</protein>
<gene>
    <name evidence="2" type="primary">rpsH</name>
    <name type="ordered locus">SPA3292</name>
</gene>
<sequence length="130" mass="14127">MSMQDPIADMLTRIRNGQAANKAAVTMPSSKLKVAIANVLKEEGFIEDFKVEGDTKPELELTLKYFQGKAVVESIQRVSRPGLRIYKRKDELPKVMAGLGIAVVSTSKGVMTDRAARQAGLGGEIICYVA</sequence>
<organism>
    <name type="scientific">Salmonella paratyphi A (strain ATCC 9150 / SARB42)</name>
    <dbReference type="NCBI Taxonomy" id="295319"/>
    <lineage>
        <taxon>Bacteria</taxon>
        <taxon>Pseudomonadati</taxon>
        <taxon>Pseudomonadota</taxon>
        <taxon>Gammaproteobacteria</taxon>
        <taxon>Enterobacterales</taxon>
        <taxon>Enterobacteriaceae</taxon>
        <taxon>Salmonella</taxon>
    </lineage>
</organism>
<comment type="function">
    <text evidence="2">One of the primary rRNA binding proteins, it binds directly to 16S rRNA central domain where it helps coordinate assembly of the platform of the 30S subunit.</text>
</comment>
<comment type="subunit">
    <text evidence="2">Part of the 30S ribosomal subunit. Contacts proteins S5 and S12.</text>
</comment>
<comment type="similarity">
    <text evidence="2">Belongs to the universal ribosomal protein uS8 family.</text>
</comment>